<accession>P0CAL1</accession>
<comment type="similarity">
    <text evidence="1">Belongs to the asfivirus C84L family.</text>
</comment>
<sequence length="22" mass="2712">MMLFITVYDINRKQKKRYGLHG</sequence>
<reference key="1">
    <citation type="submission" date="2003-03" db="EMBL/GenBank/DDBJ databases">
        <title>African swine fever virus genomes.</title>
        <authorList>
            <person name="Kutish G.F."/>
            <person name="Rock D.L."/>
        </authorList>
    </citation>
    <scope>NUCLEOTIDE SEQUENCE [LARGE SCALE GENOMIC DNA]</scope>
</reference>
<gene>
    <name type="ordered locus">Mal-071</name>
</gene>
<dbReference type="EMBL" id="AY261361">
    <property type="status" value="NOT_ANNOTATED_CDS"/>
    <property type="molecule type" value="Genomic_DNA"/>
</dbReference>
<dbReference type="Proteomes" id="UP000000860">
    <property type="component" value="Segment"/>
</dbReference>
<evidence type="ECO:0000305" key="1"/>
<feature type="chain" id="PRO_0000373741" description="Uncharacterized protein C84L">
    <location>
        <begin position="1"/>
        <end position="22"/>
    </location>
</feature>
<organismHost>
    <name type="scientific">Ornithodoros</name>
    <name type="common">relapsing fever ticks</name>
    <dbReference type="NCBI Taxonomy" id="6937"/>
</organismHost>
<organismHost>
    <name type="scientific">Phacochoerus aethiopicus</name>
    <name type="common">Warthog</name>
    <dbReference type="NCBI Taxonomy" id="85517"/>
</organismHost>
<organismHost>
    <name type="scientific">Phacochoerus africanus</name>
    <name type="common">Warthog</name>
    <dbReference type="NCBI Taxonomy" id="41426"/>
</organismHost>
<organismHost>
    <name type="scientific">Potamochoerus larvatus</name>
    <name type="common">Bushpig</name>
    <dbReference type="NCBI Taxonomy" id="273792"/>
</organismHost>
<organismHost>
    <name type="scientific">Sus scrofa</name>
    <name type="common">Pig</name>
    <dbReference type="NCBI Taxonomy" id="9823"/>
</organismHost>
<organism>
    <name type="scientific">African swine fever virus (isolate Tick/Malawi/Lil 20-1/1983)</name>
    <name type="common">ASFV</name>
    <dbReference type="NCBI Taxonomy" id="10500"/>
    <lineage>
        <taxon>Viruses</taxon>
        <taxon>Varidnaviria</taxon>
        <taxon>Bamfordvirae</taxon>
        <taxon>Nucleocytoviricota</taxon>
        <taxon>Pokkesviricetes</taxon>
        <taxon>Asfuvirales</taxon>
        <taxon>Asfarviridae</taxon>
        <taxon>Asfivirus</taxon>
        <taxon>African swine fever virus</taxon>
    </lineage>
</organism>
<proteinExistence type="inferred from homology"/>
<protein>
    <recommendedName>
        <fullName>Uncharacterized protein C84L</fullName>
        <shortName>pC84L</shortName>
    </recommendedName>
</protein>
<name>VF84L_ASFM2</name>